<protein>
    <recommendedName>
        <fullName evidence="1">Beta-hexosaminidase</fullName>
        <ecNumber evidence="1">3.2.1.52</ecNumber>
    </recommendedName>
    <alternativeName>
        <fullName evidence="1">Beta-N-acetylhexosaminidase</fullName>
    </alternativeName>
    <alternativeName>
        <fullName evidence="1">N-acetyl-beta-glucosaminidase</fullName>
    </alternativeName>
</protein>
<name>NAGZ_SHEFN</name>
<gene>
    <name evidence="1" type="primary">nagZ</name>
    <name type="ordered locus">Sfri_2401</name>
</gene>
<feature type="chain" id="PRO_1000005661" description="Beta-hexosaminidase">
    <location>
        <begin position="1"/>
        <end position="341"/>
    </location>
</feature>
<feature type="active site" description="Proton donor/acceptor" evidence="1">
    <location>
        <position position="177"/>
    </location>
</feature>
<feature type="active site" description="Nucleophile" evidence="1">
    <location>
        <position position="249"/>
    </location>
</feature>
<feature type="binding site" evidence="1">
    <location>
        <position position="61"/>
    </location>
    <ligand>
        <name>substrate</name>
    </ligand>
</feature>
<feature type="binding site" evidence="1">
    <location>
        <position position="69"/>
    </location>
    <ligand>
        <name>substrate</name>
    </ligand>
</feature>
<feature type="binding site" evidence="1">
    <location>
        <position position="134"/>
    </location>
    <ligand>
        <name>substrate</name>
    </ligand>
</feature>
<feature type="binding site" evidence="1">
    <location>
        <begin position="164"/>
        <end position="165"/>
    </location>
    <ligand>
        <name>substrate</name>
    </ligand>
</feature>
<feature type="site" description="Important for catalytic activity" evidence="1">
    <location>
        <position position="175"/>
    </location>
</feature>
<organism>
    <name type="scientific">Shewanella frigidimarina (strain NCIMB 400)</name>
    <dbReference type="NCBI Taxonomy" id="318167"/>
    <lineage>
        <taxon>Bacteria</taxon>
        <taxon>Pseudomonadati</taxon>
        <taxon>Pseudomonadota</taxon>
        <taxon>Gammaproteobacteria</taxon>
        <taxon>Alteromonadales</taxon>
        <taxon>Shewanellaceae</taxon>
        <taxon>Shewanella</taxon>
    </lineage>
</organism>
<accession>Q080R9</accession>
<proteinExistence type="inferred from homology"/>
<sequence length="341" mass="36725">MSYLMMDLAGLTVSATETAQLQHPQVGGIILFSRNCENKNQLIELVKSVRSIRPELLIAVDHEGGRVQRFREGFSLIPAMGDILPAAKGDLTLAKQWAKECGFLMAVELLACDIDLSFAPVLDVNGISEVIGKRSFSAVPDEVSALAQQFIIGMNEAGMAAVGKHFPGHGSVAADSHIAMPVDPRTKEQVEAFDMQPFKHLIGSQQLQGVMPAHVVYSNIDPNPAGFSSYWLQTILRQQLGFDGVIFSDDLGMKGASFAGNYLGRAKAALDAGCDMILVCNDSVGVNALLTEFDWPAAEPTHTALSLKGNTAQASQALEQQTRWQAAQLLAMDITRIAQSL</sequence>
<reference key="1">
    <citation type="submission" date="2006-08" db="EMBL/GenBank/DDBJ databases">
        <title>Complete sequence of Shewanella frigidimarina NCIMB 400.</title>
        <authorList>
            <consortium name="US DOE Joint Genome Institute"/>
            <person name="Copeland A."/>
            <person name="Lucas S."/>
            <person name="Lapidus A."/>
            <person name="Barry K."/>
            <person name="Detter J.C."/>
            <person name="Glavina del Rio T."/>
            <person name="Hammon N."/>
            <person name="Israni S."/>
            <person name="Dalin E."/>
            <person name="Tice H."/>
            <person name="Pitluck S."/>
            <person name="Fredrickson J.K."/>
            <person name="Kolker E."/>
            <person name="McCuel L.A."/>
            <person name="DiChristina T."/>
            <person name="Nealson K.H."/>
            <person name="Newman D."/>
            <person name="Tiedje J.M."/>
            <person name="Zhou J."/>
            <person name="Romine M.F."/>
            <person name="Culley D.E."/>
            <person name="Serres M."/>
            <person name="Chertkov O."/>
            <person name="Brettin T."/>
            <person name="Bruce D."/>
            <person name="Han C."/>
            <person name="Tapia R."/>
            <person name="Gilna P."/>
            <person name="Schmutz J."/>
            <person name="Larimer F."/>
            <person name="Land M."/>
            <person name="Hauser L."/>
            <person name="Kyrpides N."/>
            <person name="Mikhailova N."/>
            <person name="Richardson P."/>
        </authorList>
    </citation>
    <scope>NUCLEOTIDE SEQUENCE [LARGE SCALE GENOMIC DNA]</scope>
    <source>
        <strain>NCIMB 400</strain>
    </source>
</reference>
<dbReference type="EC" id="3.2.1.52" evidence="1"/>
<dbReference type="EMBL" id="CP000447">
    <property type="protein sequence ID" value="ABI72246.1"/>
    <property type="molecule type" value="Genomic_DNA"/>
</dbReference>
<dbReference type="RefSeq" id="WP_011637855.1">
    <property type="nucleotide sequence ID" value="NC_008345.1"/>
</dbReference>
<dbReference type="SMR" id="Q080R9"/>
<dbReference type="STRING" id="318167.Sfri_2401"/>
<dbReference type="CAZy" id="GH3">
    <property type="family name" value="Glycoside Hydrolase Family 3"/>
</dbReference>
<dbReference type="KEGG" id="sfr:Sfri_2401"/>
<dbReference type="eggNOG" id="COG1472">
    <property type="taxonomic scope" value="Bacteria"/>
</dbReference>
<dbReference type="HOGENOM" id="CLU_008392_0_0_6"/>
<dbReference type="OrthoDB" id="9786661at2"/>
<dbReference type="UniPathway" id="UPA00544"/>
<dbReference type="Proteomes" id="UP000000684">
    <property type="component" value="Chromosome"/>
</dbReference>
<dbReference type="GO" id="GO:0005737">
    <property type="term" value="C:cytoplasm"/>
    <property type="evidence" value="ECO:0007669"/>
    <property type="project" value="UniProtKB-SubCell"/>
</dbReference>
<dbReference type="GO" id="GO:0004563">
    <property type="term" value="F:beta-N-acetylhexosaminidase activity"/>
    <property type="evidence" value="ECO:0007669"/>
    <property type="project" value="UniProtKB-UniRule"/>
</dbReference>
<dbReference type="GO" id="GO:0005975">
    <property type="term" value="P:carbohydrate metabolic process"/>
    <property type="evidence" value="ECO:0007669"/>
    <property type="project" value="InterPro"/>
</dbReference>
<dbReference type="GO" id="GO:0051301">
    <property type="term" value="P:cell division"/>
    <property type="evidence" value="ECO:0007669"/>
    <property type="project" value="UniProtKB-KW"/>
</dbReference>
<dbReference type="GO" id="GO:0071555">
    <property type="term" value="P:cell wall organization"/>
    <property type="evidence" value="ECO:0007669"/>
    <property type="project" value="UniProtKB-KW"/>
</dbReference>
<dbReference type="GO" id="GO:0009252">
    <property type="term" value="P:peptidoglycan biosynthetic process"/>
    <property type="evidence" value="ECO:0007669"/>
    <property type="project" value="UniProtKB-KW"/>
</dbReference>
<dbReference type="GO" id="GO:0009254">
    <property type="term" value="P:peptidoglycan turnover"/>
    <property type="evidence" value="ECO:0007669"/>
    <property type="project" value="UniProtKB-UniRule"/>
</dbReference>
<dbReference type="GO" id="GO:0008360">
    <property type="term" value="P:regulation of cell shape"/>
    <property type="evidence" value="ECO:0007669"/>
    <property type="project" value="UniProtKB-KW"/>
</dbReference>
<dbReference type="FunFam" id="3.20.20.300:FF:000001">
    <property type="entry name" value="Beta-hexosaminidase"/>
    <property type="match status" value="1"/>
</dbReference>
<dbReference type="Gene3D" id="3.20.20.300">
    <property type="entry name" value="Glycoside hydrolase, family 3, N-terminal domain"/>
    <property type="match status" value="1"/>
</dbReference>
<dbReference type="HAMAP" id="MF_00364">
    <property type="entry name" value="NagZ"/>
    <property type="match status" value="1"/>
</dbReference>
<dbReference type="InterPro" id="IPR022956">
    <property type="entry name" value="Beta_hexosaminidase_bac"/>
</dbReference>
<dbReference type="InterPro" id="IPR019800">
    <property type="entry name" value="Glyco_hydro_3_AS"/>
</dbReference>
<dbReference type="InterPro" id="IPR001764">
    <property type="entry name" value="Glyco_hydro_3_N"/>
</dbReference>
<dbReference type="InterPro" id="IPR036962">
    <property type="entry name" value="Glyco_hydro_3_N_sf"/>
</dbReference>
<dbReference type="InterPro" id="IPR017853">
    <property type="entry name" value="Glycoside_hydrolase_SF"/>
</dbReference>
<dbReference type="InterPro" id="IPR050226">
    <property type="entry name" value="NagZ_Beta-hexosaminidase"/>
</dbReference>
<dbReference type="NCBIfam" id="NF003740">
    <property type="entry name" value="PRK05337.1"/>
    <property type="match status" value="1"/>
</dbReference>
<dbReference type="PANTHER" id="PTHR30480:SF13">
    <property type="entry name" value="BETA-HEXOSAMINIDASE"/>
    <property type="match status" value="1"/>
</dbReference>
<dbReference type="PANTHER" id="PTHR30480">
    <property type="entry name" value="BETA-HEXOSAMINIDASE-RELATED"/>
    <property type="match status" value="1"/>
</dbReference>
<dbReference type="Pfam" id="PF00933">
    <property type="entry name" value="Glyco_hydro_3"/>
    <property type="match status" value="1"/>
</dbReference>
<dbReference type="SUPFAM" id="SSF51445">
    <property type="entry name" value="(Trans)glycosidases"/>
    <property type="match status" value="1"/>
</dbReference>
<dbReference type="PROSITE" id="PS00775">
    <property type="entry name" value="GLYCOSYL_HYDROL_F3"/>
    <property type="match status" value="1"/>
</dbReference>
<keyword id="KW-0131">Cell cycle</keyword>
<keyword id="KW-0132">Cell division</keyword>
<keyword id="KW-0133">Cell shape</keyword>
<keyword id="KW-0961">Cell wall biogenesis/degradation</keyword>
<keyword id="KW-0963">Cytoplasm</keyword>
<keyword id="KW-0326">Glycosidase</keyword>
<keyword id="KW-0378">Hydrolase</keyword>
<keyword id="KW-0573">Peptidoglycan synthesis</keyword>
<keyword id="KW-1185">Reference proteome</keyword>
<comment type="function">
    <text evidence="1">Plays a role in peptidoglycan recycling by cleaving the terminal beta-1,4-linked N-acetylglucosamine (GlcNAc) from peptide-linked peptidoglycan fragments, giving rise to free GlcNAc, anhydro-N-acetylmuramic acid and anhydro-N-acetylmuramic acid-linked peptides.</text>
</comment>
<comment type="catalytic activity">
    <reaction evidence="1">
        <text>Hydrolysis of terminal non-reducing N-acetyl-D-hexosamine residues in N-acetyl-beta-D-hexosaminides.</text>
        <dbReference type="EC" id="3.2.1.52"/>
    </reaction>
</comment>
<comment type="pathway">
    <text evidence="1">Cell wall biogenesis; peptidoglycan recycling.</text>
</comment>
<comment type="subcellular location">
    <subcellularLocation>
        <location evidence="1">Cytoplasm</location>
    </subcellularLocation>
</comment>
<comment type="similarity">
    <text evidence="1">Belongs to the glycosyl hydrolase 3 family. NagZ subfamily.</text>
</comment>
<evidence type="ECO:0000255" key="1">
    <source>
        <dbReference type="HAMAP-Rule" id="MF_00364"/>
    </source>
</evidence>